<comment type="function">
    <text evidence="3">Transcription activator involved in the spatiotemporal regulation of flavonoid biosynthesis specifically in the corms of Montbretia (PubMed:31004005). Activates the promoters of enzymes involved in the biosynthesis of the flavonol kaempferol and the flavonol-glycoside kaempferol-rhamnoside (PubMed:31004005).</text>
</comment>
<comment type="subcellular location">
    <subcellularLocation>
        <location evidence="1">Nucleus</location>
    </subcellularLocation>
</comment>
<name>MYB2_CROXC</name>
<evidence type="ECO:0000255" key="1">
    <source>
        <dbReference type="PROSITE-ProRule" id="PRU00625"/>
    </source>
</evidence>
<evidence type="ECO:0000256" key="2">
    <source>
        <dbReference type="SAM" id="MobiDB-lite"/>
    </source>
</evidence>
<evidence type="ECO:0000269" key="3">
    <source>
    </source>
</evidence>
<evidence type="ECO:0000303" key="4">
    <source>
    </source>
</evidence>
<evidence type="ECO:0000305" key="5"/>
<keyword id="KW-0010">Activator</keyword>
<keyword id="KW-0238">DNA-binding</keyword>
<keyword id="KW-0284">Flavonoid biosynthesis</keyword>
<keyword id="KW-0539">Nucleus</keyword>
<keyword id="KW-0677">Repeat</keyword>
<keyword id="KW-0804">Transcription</keyword>
<keyword id="KW-0805">Transcription regulation</keyword>
<proteinExistence type="evidence at transcript level"/>
<gene>
    <name evidence="4" type="primary">MYB2</name>
</gene>
<sequence>MGRRPCCSKEGLNRGAWSAREDKVLKDYINTHGEGKWRDLPRRAGLKRCGKSCRLRWLNYLRPDIKRGNISYDEEELIIRLHKLLGNRWSLIAGRLPGRTDNEIKNYWNTYLSKKVNSQTHQHEIDGDQVPLKKTKEEEVSEKPQVIRTKAVRCTKAYMLTTHLDDNSLITNKCPEPISTERSYSPSATFLDIPMDFDMDEFLAGFECDRNFDQVCDGENPLRLDDKMEEEWRESYECLQLNVDSDIRALSSALLDSEDDWKQNGGKDELMGGGNGGPSSVS</sequence>
<protein>
    <recommendedName>
        <fullName evidence="5">Transcription factor MYB1</fullName>
    </recommendedName>
    <alternativeName>
        <fullName evidence="4">Myb-related protein 1</fullName>
        <shortName evidence="4">CcMYB2</shortName>
    </alternativeName>
</protein>
<organism>
    <name type="scientific">Crocosmia x crocosmiiflora</name>
    <name type="common">Montbretia</name>
    <name type="synonym">Crocosmia aurea x Crocosmia pottsii</name>
    <dbReference type="NCBI Taxonomy" id="1053288"/>
    <lineage>
        <taxon>Eukaryota</taxon>
        <taxon>Viridiplantae</taxon>
        <taxon>Streptophyta</taxon>
        <taxon>Embryophyta</taxon>
        <taxon>Tracheophyta</taxon>
        <taxon>Spermatophyta</taxon>
        <taxon>Magnoliopsida</taxon>
        <taxon>Liliopsida</taxon>
        <taxon>Asparagales</taxon>
        <taxon>Iridaceae</taxon>
        <taxon>Crocoideae</taxon>
        <taxon>Freesieae</taxon>
        <taxon>Crocosmia</taxon>
    </lineage>
</organism>
<feature type="chain" id="PRO_0000448214" description="Transcription factor MYB1">
    <location>
        <begin position="1"/>
        <end position="282"/>
    </location>
</feature>
<feature type="domain" description="HTH myb-type 1" evidence="1">
    <location>
        <begin position="9"/>
        <end position="61"/>
    </location>
</feature>
<feature type="domain" description="HTH myb-type 2" evidence="1">
    <location>
        <begin position="62"/>
        <end position="116"/>
    </location>
</feature>
<feature type="DNA-binding region" description="H-T-H motif" evidence="1">
    <location>
        <begin position="37"/>
        <end position="61"/>
    </location>
</feature>
<feature type="DNA-binding region" description="H-T-H motif" evidence="1">
    <location>
        <begin position="89"/>
        <end position="112"/>
    </location>
</feature>
<feature type="region of interest" description="Disordered" evidence="2">
    <location>
        <begin position="258"/>
        <end position="282"/>
    </location>
</feature>
<feature type="compositionally biased region" description="Basic and acidic residues" evidence="2">
    <location>
        <begin position="260"/>
        <end position="270"/>
    </location>
</feature>
<feature type="compositionally biased region" description="Gly residues" evidence="2">
    <location>
        <begin position="271"/>
        <end position="282"/>
    </location>
</feature>
<accession>A0A4D6Q4S0</accession>
<reference key="1">
    <citation type="journal article" date="2019" name="Plant Physiol.">
        <title>Flavonol biosynthesis genes and their use in engineering the plant antidiabetic metabolite montbretin A.</title>
        <authorList>
            <person name="Irmisch S."/>
            <person name="Ruebsam H."/>
            <person name="Jancsik S."/>
            <person name="Man Saint Yuen M."/>
            <person name="Madilao L.L."/>
            <person name="Bohlmann J."/>
        </authorList>
    </citation>
    <scope>NUCLEOTIDE SEQUENCE [MRNA]</scope>
    <scope>FUNCTION</scope>
</reference>
<dbReference type="EMBL" id="MK562526">
    <property type="protein sequence ID" value="QCF41221.1"/>
    <property type="molecule type" value="mRNA"/>
</dbReference>
<dbReference type="SMR" id="A0A4D6Q4S0"/>
<dbReference type="GO" id="GO:0005634">
    <property type="term" value="C:nucleus"/>
    <property type="evidence" value="ECO:0007669"/>
    <property type="project" value="UniProtKB-SubCell"/>
</dbReference>
<dbReference type="GO" id="GO:0003677">
    <property type="term" value="F:DNA binding"/>
    <property type="evidence" value="ECO:0007669"/>
    <property type="project" value="UniProtKB-KW"/>
</dbReference>
<dbReference type="GO" id="GO:0009813">
    <property type="term" value="P:flavonoid biosynthetic process"/>
    <property type="evidence" value="ECO:0007669"/>
    <property type="project" value="UniProtKB-KW"/>
</dbReference>
<dbReference type="CDD" id="cd00167">
    <property type="entry name" value="SANT"/>
    <property type="match status" value="2"/>
</dbReference>
<dbReference type="FunFam" id="1.10.10.60:FF:000015">
    <property type="entry name" value="Transcription factor RAX3"/>
    <property type="match status" value="1"/>
</dbReference>
<dbReference type="FunFam" id="1.10.10.60:FF:000302">
    <property type="entry name" value="Transcription factor TT2"/>
    <property type="match status" value="1"/>
</dbReference>
<dbReference type="Gene3D" id="1.10.10.60">
    <property type="entry name" value="Homeodomain-like"/>
    <property type="match status" value="2"/>
</dbReference>
<dbReference type="InterPro" id="IPR009057">
    <property type="entry name" value="Homeodomain-like_sf"/>
</dbReference>
<dbReference type="InterPro" id="IPR017930">
    <property type="entry name" value="Myb_dom"/>
</dbReference>
<dbReference type="InterPro" id="IPR015495">
    <property type="entry name" value="Myb_TF_plants"/>
</dbReference>
<dbReference type="InterPro" id="IPR001005">
    <property type="entry name" value="SANT/Myb"/>
</dbReference>
<dbReference type="PANTHER" id="PTHR47999">
    <property type="entry name" value="TRANSCRIPTION FACTOR MYB8-RELATED-RELATED"/>
    <property type="match status" value="1"/>
</dbReference>
<dbReference type="PANTHER" id="PTHR47999:SF96">
    <property type="entry name" value="TRANSCRIPTION REPRESSOR MYB6-LIKE"/>
    <property type="match status" value="1"/>
</dbReference>
<dbReference type="Pfam" id="PF00249">
    <property type="entry name" value="Myb_DNA-binding"/>
    <property type="match status" value="2"/>
</dbReference>
<dbReference type="SMART" id="SM00717">
    <property type="entry name" value="SANT"/>
    <property type="match status" value="2"/>
</dbReference>
<dbReference type="SUPFAM" id="SSF46689">
    <property type="entry name" value="Homeodomain-like"/>
    <property type="match status" value="1"/>
</dbReference>
<dbReference type="PROSITE" id="PS51294">
    <property type="entry name" value="HTH_MYB"/>
    <property type="match status" value="2"/>
</dbReference>